<protein>
    <recommendedName>
        <fullName evidence="1">tRNA uridine 5-carboxymethylaminomethyl modification enzyme MnmG</fullName>
    </recommendedName>
    <alternativeName>
        <fullName evidence="1">Glucose-inhibited division protein A</fullName>
    </alternativeName>
</protein>
<evidence type="ECO:0000255" key="1">
    <source>
        <dbReference type="HAMAP-Rule" id="MF_00129"/>
    </source>
</evidence>
<accession>A3CRB1</accession>
<reference key="1">
    <citation type="journal article" date="2007" name="J. Bacteriol.">
        <title>Genome of the opportunistic pathogen Streptococcus sanguinis.</title>
        <authorList>
            <person name="Xu P."/>
            <person name="Alves J.M."/>
            <person name="Kitten T."/>
            <person name="Brown A."/>
            <person name="Chen Z."/>
            <person name="Ozaki L.S."/>
            <person name="Manque P."/>
            <person name="Ge X."/>
            <person name="Serrano M.G."/>
            <person name="Puiu D."/>
            <person name="Hendricks S."/>
            <person name="Wang Y."/>
            <person name="Chaplin M.D."/>
            <person name="Akan D."/>
            <person name="Paik S."/>
            <person name="Peterson D.L."/>
            <person name="Macrina F.L."/>
            <person name="Buck G.A."/>
        </authorList>
    </citation>
    <scope>NUCLEOTIDE SEQUENCE [LARGE SCALE GENOMIC DNA]</scope>
    <source>
        <strain>SK36</strain>
    </source>
</reference>
<organism>
    <name type="scientific">Streptococcus sanguinis (strain SK36)</name>
    <dbReference type="NCBI Taxonomy" id="388919"/>
    <lineage>
        <taxon>Bacteria</taxon>
        <taxon>Bacillati</taxon>
        <taxon>Bacillota</taxon>
        <taxon>Bacilli</taxon>
        <taxon>Lactobacillales</taxon>
        <taxon>Streptococcaceae</taxon>
        <taxon>Streptococcus</taxon>
    </lineage>
</organism>
<gene>
    <name evidence="1" type="primary">mnmG</name>
    <name evidence="1" type="synonym">gidA</name>
    <name type="ordered locus">SSA_2359</name>
</gene>
<feature type="chain" id="PRO_1000016696" description="tRNA uridine 5-carboxymethylaminomethyl modification enzyme MnmG">
    <location>
        <begin position="1"/>
        <end position="635"/>
    </location>
</feature>
<feature type="binding site" evidence="1">
    <location>
        <begin position="15"/>
        <end position="20"/>
    </location>
    <ligand>
        <name>FAD</name>
        <dbReference type="ChEBI" id="CHEBI:57692"/>
    </ligand>
</feature>
<feature type="binding site" evidence="1">
    <location>
        <begin position="276"/>
        <end position="290"/>
    </location>
    <ligand>
        <name>NAD(+)</name>
        <dbReference type="ChEBI" id="CHEBI:57540"/>
    </ligand>
</feature>
<dbReference type="EMBL" id="CP000387">
    <property type="protein sequence ID" value="ABN45716.1"/>
    <property type="molecule type" value="Genomic_DNA"/>
</dbReference>
<dbReference type="RefSeq" id="WP_011837713.1">
    <property type="nucleotide sequence ID" value="NC_009009.1"/>
</dbReference>
<dbReference type="RefSeq" id="YP_001036266.1">
    <property type="nucleotide sequence ID" value="NC_009009.1"/>
</dbReference>
<dbReference type="SMR" id="A3CRB1"/>
<dbReference type="STRING" id="388919.SSA_2359"/>
<dbReference type="KEGG" id="ssa:SSA_2359"/>
<dbReference type="PATRIC" id="fig|388919.9.peg.2240"/>
<dbReference type="eggNOG" id="COG0445">
    <property type="taxonomic scope" value="Bacteria"/>
</dbReference>
<dbReference type="HOGENOM" id="CLU_007831_2_2_9"/>
<dbReference type="OrthoDB" id="9815560at2"/>
<dbReference type="Proteomes" id="UP000002148">
    <property type="component" value="Chromosome"/>
</dbReference>
<dbReference type="GO" id="GO:0005829">
    <property type="term" value="C:cytosol"/>
    <property type="evidence" value="ECO:0007669"/>
    <property type="project" value="TreeGrafter"/>
</dbReference>
<dbReference type="GO" id="GO:0050660">
    <property type="term" value="F:flavin adenine dinucleotide binding"/>
    <property type="evidence" value="ECO:0007669"/>
    <property type="project" value="UniProtKB-UniRule"/>
</dbReference>
<dbReference type="GO" id="GO:0030488">
    <property type="term" value="P:tRNA methylation"/>
    <property type="evidence" value="ECO:0007669"/>
    <property type="project" value="TreeGrafter"/>
</dbReference>
<dbReference type="GO" id="GO:0002098">
    <property type="term" value="P:tRNA wobble uridine modification"/>
    <property type="evidence" value="ECO:0007669"/>
    <property type="project" value="InterPro"/>
</dbReference>
<dbReference type="FunFam" id="1.10.10.1800:FF:000001">
    <property type="entry name" value="tRNA uridine 5-carboxymethylaminomethyl modification enzyme MnmG"/>
    <property type="match status" value="1"/>
</dbReference>
<dbReference type="FunFam" id="1.10.150.570:FF:000001">
    <property type="entry name" value="tRNA uridine 5-carboxymethylaminomethyl modification enzyme MnmG"/>
    <property type="match status" value="1"/>
</dbReference>
<dbReference type="FunFam" id="3.50.50.60:FF:000002">
    <property type="entry name" value="tRNA uridine 5-carboxymethylaminomethyl modification enzyme MnmG"/>
    <property type="match status" value="1"/>
</dbReference>
<dbReference type="FunFam" id="3.50.50.60:FF:000063">
    <property type="entry name" value="tRNA uridine 5-carboxymethylaminomethyl modification enzyme MnmG"/>
    <property type="match status" value="1"/>
</dbReference>
<dbReference type="Gene3D" id="3.50.50.60">
    <property type="entry name" value="FAD/NAD(P)-binding domain"/>
    <property type="match status" value="2"/>
</dbReference>
<dbReference type="Gene3D" id="1.10.150.570">
    <property type="entry name" value="GidA associated domain, C-terminal subdomain"/>
    <property type="match status" value="1"/>
</dbReference>
<dbReference type="Gene3D" id="1.10.10.1800">
    <property type="entry name" value="tRNA uridine 5-carboxymethylaminomethyl modification enzyme MnmG/GidA"/>
    <property type="match status" value="1"/>
</dbReference>
<dbReference type="HAMAP" id="MF_00129">
    <property type="entry name" value="MnmG_GidA"/>
    <property type="match status" value="1"/>
</dbReference>
<dbReference type="InterPro" id="IPR036188">
    <property type="entry name" value="FAD/NAD-bd_sf"/>
</dbReference>
<dbReference type="InterPro" id="IPR049312">
    <property type="entry name" value="GIDA_C_N"/>
</dbReference>
<dbReference type="InterPro" id="IPR004416">
    <property type="entry name" value="MnmG"/>
</dbReference>
<dbReference type="InterPro" id="IPR002218">
    <property type="entry name" value="MnmG-rel"/>
</dbReference>
<dbReference type="InterPro" id="IPR020595">
    <property type="entry name" value="MnmG-rel_CS"/>
</dbReference>
<dbReference type="InterPro" id="IPR026904">
    <property type="entry name" value="MnmG_C"/>
</dbReference>
<dbReference type="InterPro" id="IPR047001">
    <property type="entry name" value="MnmG_C_subdom"/>
</dbReference>
<dbReference type="InterPro" id="IPR044920">
    <property type="entry name" value="MnmG_C_subdom_sf"/>
</dbReference>
<dbReference type="InterPro" id="IPR040131">
    <property type="entry name" value="MnmG_N"/>
</dbReference>
<dbReference type="NCBIfam" id="TIGR00136">
    <property type="entry name" value="mnmG_gidA"/>
    <property type="match status" value="1"/>
</dbReference>
<dbReference type="PANTHER" id="PTHR11806">
    <property type="entry name" value="GLUCOSE INHIBITED DIVISION PROTEIN A"/>
    <property type="match status" value="1"/>
</dbReference>
<dbReference type="PANTHER" id="PTHR11806:SF0">
    <property type="entry name" value="PROTEIN MTO1 HOMOLOG, MITOCHONDRIAL"/>
    <property type="match status" value="1"/>
</dbReference>
<dbReference type="Pfam" id="PF01134">
    <property type="entry name" value="GIDA"/>
    <property type="match status" value="1"/>
</dbReference>
<dbReference type="Pfam" id="PF21680">
    <property type="entry name" value="GIDA_C_1st"/>
    <property type="match status" value="1"/>
</dbReference>
<dbReference type="Pfam" id="PF13932">
    <property type="entry name" value="SAM_GIDA_C"/>
    <property type="match status" value="1"/>
</dbReference>
<dbReference type="PRINTS" id="PR00411">
    <property type="entry name" value="PNDRDTASEI"/>
</dbReference>
<dbReference type="SMART" id="SM01228">
    <property type="entry name" value="GIDA_assoc_3"/>
    <property type="match status" value="1"/>
</dbReference>
<dbReference type="SUPFAM" id="SSF51905">
    <property type="entry name" value="FAD/NAD(P)-binding domain"/>
    <property type="match status" value="1"/>
</dbReference>
<dbReference type="PROSITE" id="PS01280">
    <property type="entry name" value="GIDA_1"/>
    <property type="match status" value="1"/>
</dbReference>
<dbReference type="PROSITE" id="PS01281">
    <property type="entry name" value="GIDA_2"/>
    <property type="match status" value="1"/>
</dbReference>
<proteinExistence type="inferred from homology"/>
<name>MNMG_STRSV</name>
<keyword id="KW-0963">Cytoplasm</keyword>
<keyword id="KW-0274">FAD</keyword>
<keyword id="KW-0285">Flavoprotein</keyword>
<keyword id="KW-0520">NAD</keyword>
<keyword id="KW-1185">Reference proteome</keyword>
<keyword id="KW-0819">tRNA processing</keyword>
<comment type="function">
    <text evidence="1">NAD-binding protein involved in the addition of a carboxymethylaminomethyl (cmnm) group at the wobble position (U34) of certain tRNAs, forming tRNA-cmnm(5)s(2)U34.</text>
</comment>
<comment type="cofactor">
    <cofactor evidence="1">
        <name>FAD</name>
        <dbReference type="ChEBI" id="CHEBI:57692"/>
    </cofactor>
</comment>
<comment type="subunit">
    <text evidence="1">Homodimer. Heterotetramer of two MnmE and two MnmG subunits.</text>
</comment>
<comment type="subcellular location">
    <subcellularLocation>
        <location evidence="1">Cytoplasm</location>
    </subcellularLocation>
</comment>
<comment type="similarity">
    <text evidence="1">Belongs to the MnmG family.</text>
</comment>
<sequence length="635" mass="70832">MSHNFTESYDIIVIGAGHAGVEASLAASRMGCKVLLATINIEMLAFMPCNPSIGGSAKGIVVREVDALGGEMAKNIDKSYIQMKMLNTGKGPAVRALRAQADKELYSKEMRKTVENQENLTLRQTMINEILVEDGKVIGVKTATHQEYAAKAVIVTTGTALRGEIIIGDLKYSSGPNHSLAAIPLADNLRDLGFEIGRFKTGTPPRVKASSINYDVTEIQPGDEKANHFSYTSRDEDYVKDQVPCWLTYTNAESHEIIQNNLHRAPMFSGIVKGVGPRYCPSIEDKIVRFADKERHQLFLEPEGRDTEEVYVQGLSTSLPEDVQKDLVHSIKGLENAEMMRTGYAIEYDMIMPHQLRATLETKKISGLFTAGQTNGTSGYEEAAGQGIIAGINAALKIQGKQELILKRSDGYIGVMIDDLVTKGTVEPYRLLTSRAEYRLILRHDNADMRLTEMGREIGLVDDERWARFEIKKNQFDNEMKRLESIKLKPVKETNAKVEALGFKPLTDAVTAKEFMRRPEVSYQDVVQFIGPAAEELDEKIIELIETEIKYEGYISKALDQVEKMKRMEEKRIPANIDWDDIDSIATEARQKFKKINPETIGQASRISGVNPADISILMVYLEGKSRSISKNQAK</sequence>